<dbReference type="EMBL" id="AE014297">
    <property type="protein sequence ID" value="AAF55714.1"/>
    <property type="molecule type" value="Genomic_DNA"/>
</dbReference>
<dbReference type="EMBL" id="AY122261">
    <property type="protein sequence ID" value="AAM52773.1"/>
    <property type="status" value="ALT_INIT"/>
    <property type="molecule type" value="mRNA"/>
</dbReference>
<dbReference type="RefSeq" id="NP_524408.1">
    <property type="nucleotide sequence ID" value="NM_079684.4"/>
</dbReference>
<dbReference type="SMR" id="Q9VDS6"/>
<dbReference type="BioGRID" id="67359">
    <property type="interactions" value="5"/>
</dbReference>
<dbReference type="DIP" id="DIP-23125N"/>
<dbReference type="FunCoup" id="Q9VDS6">
    <property type="interactions" value="329"/>
</dbReference>
<dbReference type="IntAct" id="Q9VDS6">
    <property type="interactions" value="38"/>
</dbReference>
<dbReference type="STRING" id="7227.FBpp0083263"/>
<dbReference type="iPTMnet" id="Q9VDS6"/>
<dbReference type="PaxDb" id="7227-FBpp0083263"/>
<dbReference type="DNASU" id="42370"/>
<dbReference type="EnsemblMetazoa" id="FBtr0083854">
    <property type="protein sequence ID" value="FBpp0083263"/>
    <property type="gene ID" value="FBgn0038746"/>
</dbReference>
<dbReference type="GeneID" id="42370"/>
<dbReference type="KEGG" id="dme:Dmel_CG4510"/>
<dbReference type="AGR" id="FB:FBgn0038746"/>
<dbReference type="CTD" id="6838"/>
<dbReference type="FlyBase" id="FBgn0038746">
    <property type="gene designation" value="Surf6"/>
</dbReference>
<dbReference type="VEuPathDB" id="VectorBase:FBgn0038746"/>
<dbReference type="eggNOG" id="KOG2885">
    <property type="taxonomic scope" value="Eukaryota"/>
</dbReference>
<dbReference type="GeneTree" id="ENSGT00390000006980"/>
<dbReference type="HOGENOM" id="CLU_853291_0_0_1"/>
<dbReference type="InParanoid" id="Q9VDS6"/>
<dbReference type="OMA" id="NDIAWKK"/>
<dbReference type="OrthoDB" id="444809at2759"/>
<dbReference type="PhylomeDB" id="Q9VDS6"/>
<dbReference type="SignaLink" id="Q9VDS6"/>
<dbReference type="BioGRID-ORCS" id="42370">
    <property type="hits" value="0 hits in 1 CRISPR screen"/>
</dbReference>
<dbReference type="GenomeRNAi" id="42370"/>
<dbReference type="PRO" id="PR:Q9VDS6"/>
<dbReference type="Proteomes" id="UP000000803">
    <property type="component" value="Chromosome 3R"/>
</dbReference>
<dbReference type="Bgee" id="FBgn0038746">
    <property type="expression patterns" value="Expressed in posterior terminal follicle cell in ovary and 124 other cell types or tissues"/>
</dbReference>
<dbReference type="GO" id="GO:0005730">
    <property type="term" value="C:nucleolus"/>
    <property type="evidence" value="ECO:0000250"/>
    <property type="project" value="FlyBase"/>
</dbReference>
<dbReference type="GO" id="GO:0003677">
    <property type="term" value="F:DNA binding"/>
    <property type="evidence" value="ECO:0000318"/>
    <property type="project" value="GO_Central"/>
</dbReference>
<dbReference type="GO" id="GO:0003676">
    <property type="term" value="F:nucleic acid binding"/>
    <property type="evidence" value="ECO:0000250"/>
    <property type="project" value="FlyBase"/>
</dbReference>
<dbReference type="GO" id="GO:0003723">
    <property type="term" value="F:RNA binding"/>
    <property type="evidence" value="ECO:0000318"/>
    <property type="project" value="GO_Central"/>
</dbReference>
<dbReference type="GO" id="GO:0042273">
    <property type="term" value="P:ribosomal large subunit biogenesis"/>
    <property type="evidence" value="ECO:0000318"/>
    <property type="project" value="GO_Central"/>
</dbReference>
<dbReference type="GO" id="GO:0042274">
    <property type="term" value="P:ribosomal small subunit biogenesis"/>
    <property type="evidence" value="ECO:0000318"/>
    <property type="project" value="GO_Central"/>
</dbReference>
<dbReference type="GO" id="GO:0042254">
    <property type="term" value="P:ribosome biogenesis"/>
    <property type="evidence" value="ECO:0000250"/>
    <property type="project" value="FlyBase"/>
</dbReference>
<dbReference type="GO" id="GO:0007419">
    <property type="term" value="P:ventral cord development"/>
    <property type="evidence" value="ECO:0007001"/>
    <property type="project" value="FlyBase"/>
</dbReference>
<dbReference type="InterPro" id="IPR029190">
    <property type="entry name" value="Rrp14/SURF6_C"/>
</dbReference>
<dbReference type="InterPro" id="IPR007019">
    <property type="entry name" value="SURF6"/>
</dbReference>
<dbReference type="PANTHER" id="PTHR14369">
    <property type="entry name" value="SURFEIT LOCUS PROTEIN 6"/>
    <property type="match status" value="1"/>
</dbReference>
<dbReference type="PANTHER" id="PTHR14369:SF0">
    <property type="entry name" value="SURFEIT LOCUS PROTEIN 6"/>
    <property type="match status" value="1"/>
</dbReference>
<dbReference type="Pfam" id="PF04935">
    <property type="entry name" value="SURF6"/>
    <property type="match status" value="1"/>
</dbReference>
<feature type="chain" id="PRO_0000220973" description="Surfeit locus protein 6 homolog">
    <location>
        <begin position="1"/>
        <end position="324"/>
    </location>
</feature>
<feature type="region of interest" description="Disordered" evidence="2">
    <location>
        <begin position="53"/>
        <end position="167"/>
    </location>
</feature>
<feature type="region of interest" description="Disordered" evidence="2">
    <location>
        <begin position="264"/>
        <end position="324"/>
    </location>
</feature>
<feature type="compositionally biased region" description="Basic residues" evidence="2">
    <location>
        <begin position="115"/>
        <end position="128"/>
    </location>
</feature>
<feature type="compositionally biased region" description="Basic and acidic residues" evidence="2">
    <location>
        <begin position="157"/>
        <end position="166"/>
    </location>
</feature>
<feature type="compositionally biased region" description="Basic residues" evidence="2">
    <location>
        <begin position="264"/>
        <end position="275"/>
    </location>
</feature>
<feature type="compositionally biased region" description="Basic and acidic residues" evidence="2">
    <location>
        <begin position="276"/>
        <end position="303"/>
    </location>
</feature>
<feature type="compositionally biased region" description="Basic residues" evidence="2">
    <location>
        <begin position="304"/>
        <end position="324"/>
    </location>
</feature>
<feature type="modified residue" description="Phosphoserine" evidence="3">
    <location>
        <position position="87"/>
    </location>
</feature>
<name>SURF6_DROME</name>
<keyword id="KW-0539">Nucleus</keyword>
<keyword id="KW-0597">Phosphoprotein</keyword>
<keyword id="KW-1185">Reference proteome</keyword>
<organism>
    <name type="scientific">Drosophila melanogaster</name>
    <name type="common">Fruit fly</name>
    <dbReference type="NCBI Taxonomy" id="7227"/>
    <lineage>
        <taxon>Eukaryota</taxon>
        <taxon>Metazoa</taxon>
        <taxon>Ecdysozoa</taxon>
        <taxon>Arthropoda</taxon>
        <taxon>Hexapoda</taxon>
        <taxon>Insecta</taxon>
        <taxon>Pterygota</taxon>
        <taxon>Neoptera</taxon>
        <taxon>Endopterygota</taxon>
        <taxon>Diptera</taxon>
        <taxon>Brachycera</taxon>
        <taxon>Muscomorpha</taxon>
        <taxon>Ephydroidea</taxon>
        <taxon>Drosophilidae</taxon>
        <taxon>Drosophila</taxon>
        <taxon>Sophophora</taxon>
    </lineage>
</organism>
<sequence>MTQAEIVKCLREEYEIEHNKDQKPEKEDLPAITKKFYQRVLELLTIHKVPYSKQEDEETYEEYLLSDTEESGNKKKKQQGKLKNQDSDDEDVEARIASIKNKLRQKKGPTTERQQKRRESKKLKRSKGVQKLLLSSAKNLKNENVKHQKLKNGVVKSEQETEDSKEQIQPVKVQPVYNQEAKIVYSKVDFAANPGGKAKKSHQNPKEILKKLRDTKKHLTELREQGETDKAAEIQTDIAWRNAFDKVEGKKVKDDTKLLQKAIKKRRVEKKKSKTKWTERKQKVEHDKEKRQKKRQENLEKRSKDKKNRKLKTASKRGRIIPGY</sequence>
<reference key="1">
    <citation type="journal article" date="2000" name="Science">
        <title>The genome sequence of Drosophila melanogaster.</title>
        <authorList>
            <person name="Adams M.D."/>
            <person name="Celniker S.E."/>
            <person name="Holt R.A."/>
            <person name="Evans C.A."/>
            <person name="Gocayne J.D."/>
            <person name="Amanatides P.G."/>
            <person name="Scherer S.E."/>
            <person name="Li P.W."/>
            <person name="Hoskins R.A."/>
            <person name="Galle R.F."/>
            <person name="George R.A."/>
            <person name="Lewis S.E."/>
            <person name="Richards S."/>
            <person name="Ashburner M."/>
            <person name="Henderson S.N."/>
            <person name="Sutton G.G."/>
            <person name="Wortman J.R."/>
            <person name="Yandell M.D."/>
            <person name="Zhang Q."/>
            <person name="Chen L.X."/>
            <person name="Brandon R.C."/>
            <person name="Rogers Y.-H.C."/>
            <person name="Blazej R.G."/>
            <person name="Champe M."/>
            <person name="Pfeiffer B.D."/>
            <person name="Wan K.H."/>
            <person name="Doyle C."/>
            <person name="Baxter E.G."/>
            <person name="Helt G."/>
            <person name="Nelson C.R."/>
            <person name="Miklos G.L.G."/>
            <person name="Abril J.F."/>
            <person name="Agbayani A."/>
            <person name="An H.-J."/>
            <person name="Andrews-Pfannkoch C."/>
            <person name="Baldwin D."/>
            <person name="Ballew R.M."/>
            <person name="Basu A."/>
            <person name="Baxendale J."/>
            <person name="Bayraktaroglu L."/>
            <person name="Beasley E.M."/>
            <person name="Beeson K.Y."/>
            <person name="Benos P.V."/>
            <person name="Berman B.P."/>
            <person name="Bhandari D."/>
            <person name="Bolshakov S."/>
            <person name="Borkova D."/>
            <person name="Botchan M.R."/>
            <person name="Bouck J."/>
            <person name="Brokstein P."/>
            <person name="Brottier P."/>
            <person name="Burtis K.C."/>
            <person name="Busam D.A."/>
            <person name="Butler H."/>
            <person name="Cadieu E."/>
            <person name="Center A."/>
            <person name="Chandra I."/>
            <person name="Cherry J.M."/>
            <person name="Cawley S."/>
            <person name="Dahlke C."/>
            <person name="Davenport L.B."/>
            <person name="Davies P."/>
            <person name="de Pablos B."/>
            <person name="Delcher A."/>
            <person name="Deng Z."/>
            <person name="Mays A.D."/>
            <person name="Dew I."/>
            <person name="Dietz S.M."/>
            <person name="Dodson K."/>
            <person name="Doup L.E."/>
            <person name="Downes M."/>
            <person name="Dugan-Rocha S."/>
            <person name="Dunkov B.C."/>
            <person name="Dunn P."/>
            <person name="Durbin K.J."/>
            <person name="Evangelista C.C."/>
            <person name="Ferraz C."/>
            <person name="Ferriera S."/>
            <person name="Fleischmann W."/>
            <person name="Fosler C."/>
            <person name="Gabrielian A.E."/>
            <person name="Garg N.S."/>
            <person name="Gelbart W.M."/>
            <person name="Glasser K."/>
            <person name="Glodek A."/>
            <person name="Gong F."/>
            <person name="Gorrell J.H."/>
            <person name="Gu Z."/>
            <person name="Guan P."/>
            <person name="Harris M."/>
            <person name="Harris N.L."/>
            <person name="Harvey D.A."/>
            <person name="Heiman T.J."/>
            <person name="Hernandez J.R."/>
            <person name="Houck J."/>
            <person name="Hostin D."/>
            <person name="Houston K.A."/>
            <person name="Howland T.J."/>
            <person name="Wei M.-H."/>
            <person name="Ibegwam C."/>
            <person name="Jalali M."/>
            <person name="Kalush F."/>
            <person name="Karpen G.H."/>
            <person name="Ke Z."/>
            <person name="Kennison J.A."/>
            <person name="Ketchum K.A."/>
            <person name="Kimmel B.E."/>
            <person name="Kodira C.D."/>
            <person name="Kraft C.L."/>
            <person name="Kravitz S."/>
            <person name="Kulp D."/>
            <person name="Lai Z."/>
            <person name="Lasko P."/>
            <person name="Lei Y."/>
            <person name="Levitsky A.A."/>
            <person name="Li J.H."/>
            <person name="Li Z."/>
            <person name="Liang Y."/>
            <person name="Lin X."/>
            <person name="Liu X."/>
            <person name="Mattei B."/>
            <person name="McIntosh T.C."/>
            <person name="McLeod M.P."/>
            <person name="McPherson D."/>
            <person name="Merkulov G."/>
            <person name="Milshina N.V."/>
            <person name="Mobarry C."/>
            <person name="Morris J."/>
            <person name="Moshrefi A."/>
            <person name="Mount S.M."/>
            <person name="Moy M."/>
            <person name="Murphy B."/>
            <person name="Murphy L."/>
            <person name="Muzny D.M."/>
            <person name="Nelson D.L."/>
            <person name="Nelson D.R."/>
            <person name="Nelson K.A."/>
            <person name="Nixon K."/>
            <person name="Nusskern D.R."/>
            <person name="Pacleb J.M."/>
            <person name="Palazzolo M."/>
            <person name="Pittman G.S."/>
            <person name="Pan S."/>
            <person name="Pollard J."/>
            <person name="Puri V."/>
            <person name="Reese M.G."/>
            <person name="Reinert K."/>
            <person name="Remington K."/>
            <person name="Saunders R.D.C."/>
            <person name="Scheeler F."/>
            <person name="Shen H."/>
            <person name="Shue B.C."/>
            <person name="Siden-Kiamos I."/>
            <person name="Simpson M."/>
            <person name="Skupski M.P."/>
            <person name="Smith T.J."/>
            <person name="Spier E."/>
            <person name="Spradling A.C."/>
            <person name="Stapleton M."/>
            <person name="Strong R."/>
            <person name="Sun E."/>
            <person name="Svirskas R."/>
            <person name="Tector C."/>
            <person name="Turner R."/>
            <person name="Venter E."/>
            <person name="Wang A.H."/>
            <person name="Wang X."/>
            <person name="Wang Z.-Y."/>
            <person name="Wassarman D.A."/>
            <person name="Weinstock G.M."/>
            <person name="Weissenbach J."/>
            <person name="Williams S.M."/>
            <person name="Woodage T."/>
            <person name="Worley K.C."/>
            <person name="Wu D."/>
            <person name="Yang S."/>
            <person name="Yao Q.A."/>
            <person name="Ye J."/>
            <person name="Yeh R.-F."/>
            <person name="Zaveri J.S."/>
            <person name="Zhan M."/>
            <person name="Zhang G."/>
            <person name="Zhao Q."/>
            <person name="Zheng L."/>
            <person name="Zheng X.H."/>
            <person name="Zhong F.N."/>
            <person name="Zhong W."/>
            <person name="Zhou X."/>
            <person name="Zhu S.C."/>
            <person name="Zhu X."/>
            <person name="Smith H.O."/>
            <person name="Gibbs R.A."/>
            <person name="Myers E.W."/>
            <person name="Rubin G.M."/>
            <person name="Venter J.C."/>
        </authorList>
    </citation>
    <scope>NUCLEOTIDE SEQUENCE [LARGE SCALE GENOMIC DNA]</scope>
    <source>
        <strain>Berkeley</strain>
    </source>
</reference>
<reference key="2">
    <citation type="journal article" date="2002" name="Genome Biol.">
        <title>Annotation of the Drosophila melanogaster euchromatic genome: a systematic review.</title>
        <authorList>
            <person name="Misra S."/>
            <person name="Crosby M.A."/>
            <person name="Mungall C.J."/>
            <person name="Matthews B.B."/>
            <person name="Campbell K.S."/>
            <person name="Hradecky P."/>
            <person name="Huang Y."/>
            <person name="Kaminker J.S."/>
            <person name="Millburn G.H."/>
            <person name="Prochnik S.E."/>
            <person name="Smith C.D."/>
            <person name="Tupy J.L."/>
            <person name="Whitfield E.J."/>
            <person name="Bayraktaroglu L."/>
            <person name="Berman B.P."/>
            <person name="Bettencourt B.R."/>
            <person name="Celniker S.E."/>
            <person name="de Grey A.D.N.J."/>
            <person name="Drysdale R.A."/>
            <person name="Harris N.L."/>
            <person name="Richter J."/>
            <person name="Russo S."/>
            <person name="Schroeder A.J."/>
            <person name="Shu S.Q."/>
            <person name="Stapleton M."/>
            <person name="Yamada C."/>
            <person name="Ashburner M."/>
            <person name="Gelbart W.M."/>
            <person name="Rubin G.M."/>
            <person name="Lewis S.E."/>
        </authorList>
    </citation>
    <scope>GENOME REANNOTATION</scope>
    <source>
        <strain>Berkeley</strain>
    </source>
</reference>
<reference key="3">
    <citation type="journal article" date="2002" name="Genome Biol.">
        <title>A Drosophila full-length cDNA resource.</title>
        <authorList>
            <person name="Stapleton M."/>
            <person name="Carlson J.W."/>
            <person name="Brokstein P."/>
            <person name="Yu C."/>
            <person name="Champe M."/>
            <person name="George R.A."/>
            <person name="Guarin H."/>
            <person name="Kronmiller B."/>
            <person name="Pacleb J.M."/>
            <person name="Park S."/>
            <person name="Wan K.H."/>
            <person name="Rubin G.M."/>
            <person name="Celniker S.E."/>
        </authorList>
    </citation>
    <scope>NUCLEOTIDE SEQUENCE [LARGE SCALE MRNA]</scope>
    <source>
        <strain>Berkeley</strain>
        <tissue>Embryo</tissue>
    </source>
</reference>
<reference key="4">
    <citation type="journal article" date="2007" name="Mol. Biosyst.">
        <title>An integrated chemical, mass spectrometric and computational strategy for (quantitative) phosphoproteomics: application to Drosophila melanogaster Kc167 cells.</title>
        <authorList>
            <person name="Bodenmiller B."/>
            <person name="Mueller L.N."/>
            <person name="Pedrioli P.G.A."/>
            <person name="Pflieger D."/>
            <person name="Juenger M.A."/>
            <person name="Eng J.K."/>
            <person name="Aebersold R."/>
            <person name="Tao W.A."/>
        </authorList>
    </citation>
    <scope>PHOSPHORYLATION [LARGE SCALE ANALYSIS] AT SER-87</scope>
    <scope>IDENTIFICATION BY MASS SPECTROMETRY</scope>
</reference>
<comment type="function">
    <text evidence="1">Involved in a nucleolar function.</text>
</comment>
<comment type="subcellular location">
    <subcellularLocation>
        <location evidence="1">Nucleus</location>
        <location evidence="1">Nucleolus</location>
    </subcellularLocation>
</comment>
<comment type="similarity">
    <text evidence="4">Belongs to the SURF6 family.</text>
</comment>
<comment type="sequence caution" evidence="4">
    <conflict type="erroneous initiation">
        <sequence resource="EMBL-CDS" id="AAM52773"/>
    </conflict>
</comment>
<evidence type="ECO:0000250" key="1"/>
<evidence type="ECO:0000256" key="2">
    <source>
        <dbReference type="SAM" id="MobiDB-lite"/>
    </source>
</evidence>
<evidence type="ECO:0000269" key="3">
    <source>
    </source>
</evidence>
<evidence type="ECO:0000305" key="4"/>
<protein>
    <recommendedName>
        <fullName>Surfeit locus protein 6 homolog</fullName>
    </recommendedName>
</protein>
<gene>
    <name type="primary">Surf6</name>
    <name type="ORF">CG4510</name>
</gene>
<proteinExistence type="evidence at protein level"/>
<accession>Q9VDS6</accession>
<accession>Q8MQW1</accession>